<evidence type="ECO:0000255" key="1">
    <source>
        <dbReference type="HAMAP-Rule" id="MF_02076"/>
    </source>
</evidence>
<sequence>MDEEIKHEIRKMALQNAFEHGGQTQDKIILGKILGTKPEFRTKVKEISGEISEIVASVNQLSPEEQQKEMEEKFPEALAPKEKIEEREGLPELKDAIQGKVVTRFPPEPNGYPHIGHAKAAIINSEYAKMYGGKFILRMDDTNPEAERMEYHAAIKVGLEWLGIEFDQVKSTSDDMEVFYEKGIELINSGKAYVCTCKREDISQNRRERKACKCSMEDVGKNNKNWEKMQNKFKPGEAIVRFRGDMKADNAVMRDPVLLRIIDEKHYTVGDKYRIWPSYDFAVAIEDSIDGVTHAFRSKEFELRKELIDAILDALGMRKPQQGFFSRLEFKGMPISKRIIKPLIEEGKVSWYDDPRLPTLEALRRRGIKPEAIRKFIMSLGLTKANTLAPFDALEAFNRKFVDADSMRLFMVKNAKKLKIKNLQSTIVEVPNHPINDLGKRKIEITEDFYISGDDSEAIKEQSTIRLLGLGNVKITKIGNELEGEFERDGDSSNILKIQWVPQKTAHEIKMIIPKILFNDEEFNEDSLEELDVYTEPQYLQLKEGEEIQFVRFGYCRKDSQNQAIFTHK</sequence>
<reference key="1">
    <citation type="journal article" date="2010" name="Proc. Natl. Acad. Sci. U.S.A.">
        <title>Nitrosopumilus maritimus genome reveals unique mechanisms for nitrification and autotrophy in globally distributed marine crenarchaea.</title>
        <authorList>
            <person name="Walker C.B."/>
            <person name="de la Torre J.R."/>
            <person name="Klotz M.G."/>
            <person name="Urakawa H."/>
            <person name="Pinel N."/>
            <person name="Arp D.J."/>
            <person name="Brochier-Armanet C."/>
            <person name="Chain P.S."/>
            <person name="Chan P.P."/>
            <person name="Gollabgir A."/>
            <person name="Hemp J."/>
            <person name="Hugler M."/>
            <person name="Karr E.A."/>
            <person name="Konneke M."/>
            <person name="Shin M."/>
            <person name="Lawton T.J."/>
            <person name="Lowe T."/>
            <person name="Martens-Habbena W."/>
            <person name="Sayavedra-Soto L.A."/>
            <person name="Lang D."/>
            <person name="Sievert S.M."/>
            <person name="Rosenzweig A.C."/>
            <person name="Manning G."/>
            <person name="Stahl D.A."/>
        </authorList>
    </citation>
    <scope>NUCLEOTIDE SEQUENCE [LARGE SCALE GENOMIC DNA]</scope>
    <source>
        <strain>SCM1</strain>
    </source>
</reference>
<feature type="chain" id="PRO_0000367804" description="Glutamate--tRNA ligase">
    <location>
        <begin position="1"/>
        <end position="569"/>
    </location>
</feature>
<feature type="short sequence motif" description="'HIGH' region" evidence="1">
    <location>
        <begin position="107"/>
        <end position="117"/>
    </location>
</feature>
<dbReference type="EC" id="6.1.1.17" evidence="1"/>
<dbReference type="EMBL" id="CP000866">
    <property type="protein sequence ID" value="ABX12207.1"/>
    <property type="molecule type" value="Genomic_DNA"/>
</dbReference>
<dbReference type="RefSeq" id="WP_012214694.1">
    <property type="nucleotide sequence ID" value="NC_010085.1"/>
</dbReference>
<dbReference type="SMR" id="A9A423"/>
<dbReference type="FunCoup" id="A9A423">
    <property type="interactions" value="305"/>
</dbReference>
<dbReference type="STRING" id="436308.Nmar_0311"/>
<dbReference type="EnsemblBacteria" id="ABX12207">
    <property type="protein sequence ID" value="ABX12207"/>
    <property type="gene ID" value="Nmar_0311"/>
</dbReference>
<dbReference type="GeneID" id="5773999"/>
<dbReference type="KEGG" id="nmr:Nmar_0311"/>
<dbReference type="eggNOG" id="arCOG04302">
    <property type="taxonomic scope" value="Archaea"/>
</dbReference>
<dbReference type="HOGENOM" id="CLU_001882_2_3_2"/>
<dbReference type="InParanoid" id="A9A423"/>
<dbReference type="OrthoDB" id="10470at2157"/>
<dbReference type="PhylomeDB" id="A9A423"/>
<dbReference type="Proteomes" id="UP000000792">
    <property type="component" value="Chromosome"/>
</dbReference>
<dbReference type="GO" id="GO:0005829">
    <property type="term" value="C:cytosol"/>
    <property type="evidence" value="ECO:0000318"/>
    <property type="project" value="GO_Central"/>
</dbReference>
<dbReference type="GO" id="GO:0032991">
    <property type="term" value="C:protein-containing complex"/>
    <property type="evidence" value="ECO:0007669"/>
    <property type="project" value="UniProtKB-ARBA"/>
</dbReference>
<dbReference type="GO" id="GO:0005524">
    <property type="term" value="F:ATP binding"/>
    <property type="evidence" value="ECO:0007669"/>
    <property type="project" value="UniProtKB-UniRule"/>
</dbReference>
<dbReference type="GO" id="GO:0004818">
    <property type="term" value="F:glutamate-tRNA ligase activity"/>
    <property type="evidence" value="ECO:0007669"/>
    <property type="project" value="UniProtKB-UniRule"/>
</dbReference>
<dbReference type="GO" id="GO:0006424">
    <property type="term" value="P:glutamyl-tRNA aminoacylation"/>
    <property type="evidence" value="ECO:0007669"/>
    <property type="project" value="UniProtKB-UniRule"/>
</dbReference>
<dbReference type="FunFam" id="3.40.50.620:FF:000037">
    <property type="entry name" value="Glutamine--tRNA ligase cytoplasmic"/>
    <property type="match status" value="1"/>
</dbReference>
<dbReference type="Gene3D" id="2.40.240.100">
    <property type="match status" value="1"/>
</dbReference>
<dbReference type="Gene3D" id="3.40.50.620">
    <property type="entry name" value="HUPs"/>
    <property type="match status" value="1"/>
</dbReference>
<dbReference type="Gene3D" id="2.40.240.10">
    <property type="entry name" value="Ribosomal Protein L25, Chain P"/>
    <property type="match status" value="1"/>
</dbReference>
<dbReference type="HAMAP" id="MF_02076">
    <property type="entry name" value="Glu_tRNA_synth_type2"/>
    <property type="match status" value="1"/>
</dbReference>
<dbReference type="InterPro" id="IPR001412">
    <property type="entry name" value="aa-tRNA-synth_I_CS"/>
</dbReference>
<dbReference type="InterPro" id="IPR050132">
    <property type="entry name" value="Gln/Glu-tRNA_Ligase"/>
</dbReference>
<dbReference type="InterPro" id="IPR004526">
    <property type="entry name" value="Glu-tRNA-synth_arc/euk"/>
</dbReference>
<dbReference type="InterPro" id="IPR000924">
    <property type="entry name" value="Glu/Gln-tRNA-synth"/>
</dbReference>
<dbReference type="InterPro" id="IPR020058">
    <property type="entry name" value="Glu/Gln-tRNA-synth_Ib_cat-dom"/>
</dbReference>
<dbReference type="InterPro" id="IPR020059">
    <property type="entry name" value="Glu/Gln-tRNA-synth_Ib_codon-bd"/>
</dbReference>
<dbReference type="InterPro" id="IPR020056">
    <property type="entry name" value="Rbsml_bL25/Gln-tRNA_synth_N"/>
</dbReference>
<dbReference type="InterPro" id="IPR011035">
    <property type="entry name" value="Ribosomal_bL25/Gln-tRNA_synth"/>
</dbReference>
<dbReference type="InterPro" id="IPR014729">
    <property type="entry name" value="Rossmann-like_a/b/a_fold"/>
</dbReference>
<dbReference type="InterPro" id="IPR049437">
    <property type="entry name" value="tRNA-synt_1c_C2"/>
</dbReference>
<dbReference type="NCBIfam" id="TIGR00463">
    <property type="entry name" value="gltX_arch"/>
    <property type="match status" value="1"/>
</dbReference>
<dbReference type="NCBIfam" id="NF003169">
    <property type="entry name" value="PRK04156.1"/>
    <property type="match status" value="1"/>
</dbReference>
<dbReference type="PANTHER" id="PTHR43097:SF5">
    <property type="entry name" value="GLUTAMATE--TRNA LIGASE"/>
    <property type="match status" value="1"/>
</dbReference>
<dbReference type="PANTHER" id="PTHR43097">
    <property type="entry name" value="GLUTAMINE-TRNA LIGASE"/>
    <property type="match status" value="1"/>
</dbReference>
<dbReference type="Pfam" id="PF00749">
    <property type="entry name" value="tRNA-synt_1c"/>
    <property type="match status" value="1"/>
</dbReference>
<dbReference type="Pfam" id="PF03950">
    <property type="entry name" value="tRNA-synt_1c_C"/>
    <property type="match status" value="1"/>
</dbReference>
<dbReference type="Pfam" id="PF20974">
    <property type="entry name" value="tRNA-synt_1c_C2"/>
    <property type="match status" value="1"/>
</dbReference>
<dbReference type="PRINTS" id="PR00987">
    <property type="entry name" value="TRNASYNTHGLU"/>
</dbReference>
<dbReference type="SUPFAM" id="SSF52374">
    <property type="entry name" value="Nucleotidylyl transferase"/>
    <property type="match status" value="1"/>
</dbReference>
<dbReference type="SUPFAM" id="SSF50715">
    <property type="entry name" value="Ribosomal protein L25-like"/>
    <property type="match status" value="1"/>
</dbReference>
<dbReference type="PROSITE" id="PS00178">
    <property type="entry name" value="AA_TRNA_LIGASE_I"/>
    <property type="match status" value="1"/>
</dbReference>
<organism>
    <name type="scientific">Nitrosopumilus maritimus (strain SCM1)</name>
    <dbReference type="NCBI Taxonomy" id="436308"/>
    <lineage>
        <taxon>Archaea</taxon>
        <taxon>Nitrososphaerota</taxon>
        <taxon>Nitrososphaeria</taxon>
        <taxon>Nitrosopumilales</taxon>
        <taxon>Nitrosopumilaceae</taxon>
        <taxon>Nitrosopumilus</taxon>
    </lineage>
</organism>
<gene>
    <name evidence="1" type="primary">gltX</name>
    <name type="ordered locus">Nmar_0311</name>
</gene>
<proteinExistence type="inferred from homology"/>
<name>SYE_NITMS</name>
<keyword id="KW-0030">Aminoacyl-tRNA synthetase</keyword>
<keyword id="KW-0067">ATP-binding</keyword>
<keyword id="KW-0963">Cytoplasm</keyword>
<keyword id="KW-0436">Ligase</keyword>
<keyword id="KW-0547">Nucleotide-binding</keyword>
<keyword id="KW-0648">Protein biosynthesis</keyword>
<keyword id="KW-1185">Reference proteome</keyword>
<protein>
    <recommendedName>
        <fullName evidence="1">Glutamate--tRNA ligase</fullName>
        <ecNumber evidence="1">6.1.1.17</ecNumber>
    </recommendedName>
    <alternativeName>
        <fullName evidence="1">Glutamyl-tRNA synthetase</fullName>
        <shortName evidence="1">GluRS</shortName>
    </alternativeName>
</protein>
<accession>A9A423</accession>
<comment type="function">
    <text evidence="1">Catalyzes the attachment of glutamate to tRNA(Glu) in a two-step reaction: glutamate is first activated by ATP to form Glu-AMP and then transferred to the acceptor end of tRNA(Glu).</text>
</comment>
<comment type="catalytic activity">
    <reaction evidence="1">
        <text>tRNA(Glu) + L-glutamate + ATP = L-glutamyl-tRNA(Glu) + AMP + diphosphate</text>
        <dbReference type="Rhea" id="RHEA:23540"/>
        <dbReference type="Rhea" id="RHEA-COMP:9663"/>
        <dbReference type="Rhea" id="RHEA-COMP:9680"/>
        <dbReference type="ChEBI" id="CHEBI:29985"/>
        <dbReference type="ChEBI" id="CHEBI:30616"/>
        <dbReference type="ChEBI" id="CHEBI:33019"/>
        <dbReference type="ChEBI" id="CHEBI:78442"/>
        <dbReference type="ChEBI" id="CHEBI:78520"/>
        <dbReference type="ChEBI" id="CHEBI:456215"/>
        <dbReference type="EC" id="6.1.1.17"/>
    </reaction>
</comment>
<comment type="subcellular location">
    <subcellularLocation>
        <location evidence="1">Cytoplasm</location>
    </subcellularLocation>
</comment>
<comment type="similarity">
    <text evidence="1">Belongs to the class-I aminoacyl-tRNA synthetase family. Glutamate--tRNA ligase type 2 subfamily.</text>
</comment>